<accession>P39002</accession>
<accession>D6VVS1</accession>
<feature type="initiator methionine" description="Removed" evidence="10">
    <location>
        <position position="1"/>
    </location>
</feature>
<feature type="chain" id="PRO_0000193121" description="Long-chain-fatty-acid--CoA ligase 3">
    <location>
        <begin position="2"/>
        <end position="694"/>
    </location>
</feature>
<feature type="region of interest" description="Disordered" evidence="3">
    <location>
        <begin position="1"/>
        <end position="25"/>
    </location>
</feature>
<feature type="short sequence motif" description="FACS" evidence="1">
    <location>
        <begin position="527"/>
        <end position="576"/>
    </location>
</feature>
<feature type="binding site" evidence="2">
    <location>
        <begin position="269"/>
        <end position="280"/>
    </location>
    <ligand>
        <name>ATP</name>
        <dbReference type="ChEBI" id="CHEBI:30616"/>
    </ligand>
</feature>
<feature type="modified residue" description="N-acetylserine" evidence="10">
    <location>
        <position position="2"/>
    </location>
</feature>
<proteinExistence type="evidence at protein level"/>
<evidence type="ECO:0000250" key="1">
    <source>
        <dbReference type="UniProtKB" id="P30624"/>
    </source>
</evidence>
<evidence type="ECO:0000250" key="2">
    <source>
        <dbReference type="UniProtKB" id="P69451"/>
    </source>
</evidence>
<evidence type="ECO:0000256" key="3">
    <source>
        <dbReference type="SAM" id="MobiDB-lite"/>
    </source>
</evidence>
<evidence type="ECO:0000269" key="4">
    <source>
    </source>
</evidence>
<evidence type="ECO:0000269" key="5">
    <source>
    </source>
</evidence>
<evidence type="ECO:0000269" key="6">
    <source>
    </source>
</evidence>
<evidence type="ECO:0000269" key="7">
    <source>
    </source>
</evidence>
<evidence type="ECO:0000305" key="8"/>
<evidence type="ECO:0000305" key="9">
    <source>
    </source>
</evidence>
<evidence type="ECO:0007744" key="10">
    <source>
    </source>
</evidence>
<comment type="function">
    <text evidence="7">Activates endogenous long-chain fatty acids (LCFA) by esterification of the fatty acids into metabolically active CoA-thioesters for subsequent degradation or incorporation into phospholipids (PubMed:8206942). Acts preferentially on C16 and C18 fatty acids with a cis-double bond at C-9-C-10 (PubMed:8206942).</text>
</comment>
<comment type="catalytic activity">
    <reaction evidence="7">
        <text>a long-chain fatty acid + ATP + CoA = a long-chain fatty acyl-CoA + AMP + diphosphate</text>
        <dbReference type="Rhea" id="RHEA:15421"/>
        <dbReference type="ChEBI" id="CHEBI:30616"/>
        <dbReference type="ChEBI" id="CHEBI:33019"/>
        <dbReference type="ChEBI" id="CHEBI:57287"/>
        <dbReference type="ChEBI" id="CHEBI:57560"/>
        <dbReference type="ChEBI" id="CHEBI:83139"/>
        <dbReference type="ChEBI" id="CHEBI:456215"/>
        <dbReference type="EC" id="6.2.1.3"/>
    </reaction>
</comment>
<comment type="catalytic activity">
    <reaction evidence="7">
        <text>(9Z)-octadecenoate + ATP + CoA = (9Z)-octadecenoyl-CoA + AMP + diphosphate</text>
        <dbReference type="Rhea" id="RHEA:33607"/>
        <dbReference type="ChEBI" id="CHEBI:30616"/>
        <dbReference type="ChEBI" id="CHEBI:30823"/>
        <dbReference type="ChEBI" id="CHEBI:33019"/>
        <dbReference type="ChEBI" id="CHEBI:57287"/>
        <dbReference type="ChEBI" id="CHEBI:57387"/>
        <dbReference type="ChEBI" id="CHEBI:456215"/>
    </reaction>
    <physiologicalReaction direction="left-to-right" evidence="9">
        <dbReference type="Rhea" id="RHEA:33608"/>
    </physiologicalReaction>
</comment>
<comment type="catalytic activity">
    <reaction evidence="7">
        <text>hexadecanoate + ATP + CoA = hexadecanoyl-CoA + AMP + diphosphate</text>
        <dbReference type="Rhea" id="RHEA:30751"/>
        <dbReference type="ChEBI" id="CHEBI:7896"/>
        <dbReference type="ChEBI" id="CHEBI:30616"/>
        <dbReference type="ChEBI" id="CHEBI:33019"/>
        <dbReference type="ChEBI" id="CHEBI:57287"/>
        <dbReference type="ChEBI" id="CHEBI:57379"/>
        <dbReference type="ChEBI" id="CHEBI:456215"/>
    </reaction>
    <physiologicalReaction direction="left-to-right" evidence="9">
        <dbReference type="Rhea" id="RHEA:30752"/>
    </physiologicalReaction>
</comment>
<comment type="catalytic activity">
    <reaction evidence="7">
        <text>(9Z)-hexadecenoate + ATP + CoA = (9Z)-hexadecenoyl-CoA + AMP + diphosphate</text>
        <dbReference type="Rhea" id="RHEA:33647"/>
        <dbReference type="ChEBI" id="CHEBI:30616"/>
        <dbReference type="ChEBI" id="CHEBI:32372"/>
        <dbReference type="ChEBI" id="CHEBI:33019"/>
        <dbReference type="ChEBI" id="CHEBI:57287"/>
        <dbReference type="ChEBI" id="CHEBI:61540"/>
        <dbReference type="ChEBI" id="CHEBI:456215"/>
    </reaction>
    <physiologicalReaction direction="left-to-right" evidence="9">
        <dbReference type="Rhea" id="RHEA:33648"/>
    </physiologicalReaction>
</comment>
<comment type="catalytic activity">
    <reaction evidence="7">
        <text>(9Z)-tetradecenoate + ATP + CoA = (9Z)-tetradecenoyl-CoA + AMP + diphosphate</text>
        <dbReference type="Rhea" id="RHEA:33643"/>
        <dbReference type="ChEBI" id="CHEBI:30616"/>
        <dbReference type="ChEBI" id="CHEBI:32370"/>
        <dbReference type="ChEBI" id="CHEBI:33019"/>
        <dbReference type="ChEBI" id="CHEBI:57287"/>
        <dbReference type="ChEBI" id="CHEBI:65060"/>
        <dbReference type="ChEBI" id="CHEBI:456215"/>
    </reaction>
    <physiologicalReaction direction="left-to-right" evidence="9">
        <dbReference type="Rhea" id="RHEA:33644"/>
    </physiologicalReaction>
</comment>
<comment type="catalytic activity">
    <reaction evidence="7">
        <text>(9Z,12Z)-octadecadienoate + ATP + CoA = (9Z,12Z)-octadecadienoyl-CoA + AMP + diphosphate</text>
        <dbReference type="Rhea" id="RHEA:33651"/>
        <dbReference type="ChEBI" id="CHEBI:30245"/>
        <dbReference type="ChEBI" id="CHEBI:30616"/>
        <dbReference type="ChEBI" id="CHEBI:33019"/>
        <dbReference type="ChEBI" id="CHEBI:57287"/>
        <dbReference type="ChEBI" id="CHEBI:57383"/>
        <dbReference type="ChEBI" id="CHEBI:456215"/>
    </reaction>
    <physiologicalReaction direction="left-to-right" evidence="9">
        <dbReference type="Rhea" id="RHEA:33652"/>
    </physiologicalReaction>
</comment>
<comment type="cofactor">
    <cofactor evidence="1">
        <name>Mg(2+)</name>
        <dbReference type="ChEBI" id="CHEBI:18420"/>
    </cofactor>
</comment>
<comment type="biophysicochemical properties">
    <phDependence>
        <text evidence="7">Optimum pH is 7.7.</text>
    </phDependence>
    <temperatureDependence>
        <text evidence="7">Optimum temperature is 25 degrees Celsius.</text>
    </temperatureDependence>
</comment>
<comment type="subunit">
    <text evidence="6">Interacts with FRK1.</text>
</comment>
<comment type="subcellular location">
    <subcellularLocation>
        <location evidence="4">Cell membrane</location>
    </subcellularLocation>
</comment>
<comment type="domain">
    <text evidence="1">The FACS motif is required for catalytic activity and substrate specificity.</text>
</comment>
<comment type="miscellaneous">
    <text evidence="5">Present with 6440 molecules/cell in log phase SD medium.</text>
</comment>
<comment type="similarity">
    <text evidence="8">Belongs to the ATP-dependent AMP-binding enzyme family.</text>
</comment>
<name>LCF3_YEAST</name>
<protein>
    <recommendedName>
        <fullName>Long-chain-fatty-acid--CoA ligase 3</fullName>
        <ecNumber evidence="7">6.2.1.3</ecNumber>
    </recommendedName>
    <alternativeName>
        <fullName>Fatty acid activator 3</fullName>
    </alternativeName>
    <alternativeName>
        <fullName>Long-chain acyl-CoA synthetase 3</fullName>
    </alternativeName>
</protein>
<gene>
    <name type="primary">FAA3</name>
    <name type="ordered locus">YIL009W</name>
</gene>
<sequence>MSEQHSVAVGKAANEHETAPRRNVRVKKRPLIRPLNSSASTLYEFALECFNKGGKRDGMAWRDVIEIHETKKTIVRKVDGKDKSIEKTWLYYEMSPYKMMTYQELIWVMHDMGRGLAKIGIKPNGEHKFHIFASTSHKWMKIFLGCISQGIPVVTAYDTLGESGLIHSMVETESAAIFTDNQLLAKMIVPLQSAKDIKFLIHNEPIDPNDRRQNGKLYKAAKDAINKIREVRPDIKIYSFEEVVKIGKKSKDEVKLHPPEPKDLACIMYTSGSISAPKGVVLTHYNIVSGIAGVGHNVFGWIGSTDRVLSFLPLAHIFELVFEFEAFYWNGILGYGSVKTLTNTSTRNCKGDLVEFKPTIMIGVAAVWETVRKAILEKISDLTPVLQKIFWSAYSMKEKSVPCTGFLSRMVFKKVRQATGGHLKYIMNGGSAISIDAQKFFSIVLCPMIIGYGLTETVANACVLEPDHFEYGIVGDLVGSVTAKLVDVKDLGYYAKNNQGELLLKGAPVCSEYYKNPIETAVSFTYDGWFRTGDIVEWTPKGQLKIIDRRKNLVKTLNGEYIALEKLESVYRSNSYVKNICVYADESRVKPVGIVVPNPGPLSKFAVKLRIMKKGEDIENYIHDKALRNAVFKEMIATAKSQGLVGIELLCGIVFFDEEWTPENGFVTSAQKLKRREILAAVKSEVERVYKENS</sequence>
<dbReference type="EC" id="6.2.1.3" evidence="7"/>
<dbReference type="EMBL" id="Z29647">
    <property type="protein sequence ID" value="CAA82755.1"/>
    <property type="molecule type" value="Genomic_DNA"/>
</dbReference>
<dbReference type="EMBL" id="Z38113">
    <property type="protein sequence ID" value="CAA86241.1"/>
    <property type="molecule type" value="Genomic_DNA"/>
</dbReference>
<dbReference type="EMBL" id="AY558110">
    <property type="protein sequence ID" value="AAS56436.1"/>
    <property type="molecule type" value="Genomic_DNA"/>
</dbReference>
<dbReference type="EMBL" id="BK006942">
    <property type="protein sequence ID" value="DAA08537.1"/>
    <property type="molecule type" value="Genomic_DNA"/>
</dbReference>
<dbReference type="PIR" id="B54901">
    <property type="entry name" value="B54901"/>
</dbReference>
<dbReference type="RefSeq" id="NP_012257.1">
    <property type="nucleotide sequence ID" value="NM_001179359.1"/>
</dbReference>
<dbReference type="SMR" id="P39002"/>
<dbReference type="BioGRID" id="34983">
    <property type="interactions" value="71"/>
</dbReference>
<dbReference type="DIP" id="DIP-4210N"/>
<dbReference type="FunCoup" id="P39002">
    <property type="interactions" value="502"/>
</dbReference>
<dbReference type="IntAct" id="P39002">
    <property type="interactions" value="15"/>
</dbReference>
<dbReference type="MINT" id="P39002"/>
<dbReference type="STRING" id="4932.YIL009W"/>
<dbReference type="SwissLipids" id="SLP:000001033"/>
<dbReference type="iPTMnet" id="P39002"/>
<dbReference type="PaxDb" id="4932-YIL009W"/>
<dbReference type="PeptideAtlas" id="P39002"/>
<dbReference type="EnsemblFungi" id="YIL009W_mRNA">
    <property type="protein sequence ID" value="YIL009W"/>
    <property type="gene ID" value="YIL009W"/>
</dbReference>
<dbReference type="GeneID" id="854808"/>
<dbReference type="KEGG" id="sce:YIL009W"/>
<dbReference type="AGR" id="SGD:S000001271"/>
<dbReference type="SGD" id="S000001271">
    <property type="gene designation" value="FAA3"/>
</dbReference>
<dbReference type="VEuPathDB" id="FungiDB:YIL009W"/>
<dbReference type="eggNOG" id="KOG1180">
    <property type="taxonomic scope" value="Eukaryota"/>
</dbReference>
<dbReference type="GeneTree" id="ENSGT00940000171609"/>
<dbReference type="HOGENOM" id="CLU_000022_45_2_1"/>
<dbReference type="InParanoid" id="P39002"/>
<dbReference type="OMA" id="WEWLASI"/>
<dbReference type="OrthoDB" id="1700726at2759"/>
<dbReference type="BioCyc" id="YEAST:YIL009W-MONOMER"/>
<dbReference type="Reactome" id="R-SCE-434313">
    <property type="pathway name" value="Intracellular metabolism of fatty acids regulates insulin secretion"/>
</dbReference>
<dbReference type="Reactome" id="R-SCE-75876">
    <property type="pathway name" value="Synthesis of very long-chain fatty acyl-CoAs"/>
</dbReference>
<dbReference type="BioGRID-ORCS" id="854808">
    <property type="hits" value="3 hits in 10 CRISPR screens"/>
</dbReference>
<dbReference type="PRO" id="PR:P39002"/>
<dbReference type="Proteomes" id="UP000002311">
    <property type="component" value="Chromosome IX"/>
</dbReference>
<dbReference type="RNAct" id="P39002">
    <property type="molecule type" value="protein"/>
</dbReference>
<dbReference type="GO" id="GO:0005783">
    <property type="term" value="C:endoplasmic reticulum"/>
    <property type="evidence" value="ECO:0000318"/>
    <property type="project" value="GO_Central"/>
</dbReference>
<dbReference type="GO" id="GO:0005811">
    <property type="term" value="C:lipid droplet"/>
    <property type="evidence" value="ECO:0000318"/>
    <property type="project" value="GO_Central"/>
</dbReference>
<dbReference type="GO" id="GO:0005886">
    <property type="term" value="C:plasma membrane"/>
    <property type="evidence" value="ECO:0000318"/>
    <property type="project" value="GO_Central"/>
</dbReference>
<dbReference type="GO" id="GO:0005524">
    <property type="term" value="F:ATP binding"/>
    <property type="evidence" value="ECO:0007669"/>
    <property type="project" value="UniProtKB-KW"/>
</dbReference>
<dbReference type="GO" id="GO:0004467">
    <property type="term" value="F:long-chain fatty acid-CoA ligase activity"/>
    <property type="evidence" value="ECO:0000314"/>
    <property type="project" value="SGD"/>
</dbReference>
<dbReference type="GO" id="GO:0031957">
    <property type="term" value="F:very long-chain fatty acid-CoA ligase activity"/>
    <property type="evidence" value="ECO:0000314"/>
    <property type="project" value="SGD"/>
</dbReference>
<dbReference type="GO" id="GO:0001676">
    <property type="term" value="P:long-chain fatty acid metabolic process"/>
    <property type="evidence" value="ECO:0000316"/>
    <property type="project" value="SGD"/>
</dbReference>
<dbReference type="GO" id="GO:0035336">
    <property type="term" value="P:long-chain fatty-acyl-CoA metabolic process"/>
    <property type="evidence" value="ECO:0000318"/>
    <property type="project" value="GO_Central"/>
</dbReference>
<dbReference type="CDD" id="cd17639">
    <property type="entry name" value="LC_FACS_euk1"/>
    <property type="match status" value="1"/>
</dbReference>
<dbReference type="Gene3D" id="3.40.50.12780">
    <property type="entry name" value="N-terminal domain of ligase-like"/>
    <property type="match status" value="1"/>
</dbReference>
<dbReference type="InterPro" id="IPR020845">
    <property type="entry name" value="AMP-binding_CS"/>
</dbReference>
<dbReference type="InterPro" id="IPR000873">
    <property type="entry name" value="AMP-dep_synth/lig_dom"/>
</dbReference>
<dbReference type="InterPro" id="IPR042099">
    <property type="entry name" value="ANL_N_sf"/>
</dbReference>
<dbReference type="PANTHER" id="PTHR43272:SF83">
    <property type="entry name" value="ACYL-COA SYNTHETASE LONG-CHAIN, ISOFORM J"/>
    <property type="match status" value="1"/>
</dbReference>
<dbReference type="PANTHER" id="PTHR43272">
    <property type="entry name" value="LONG-CHAIN-FATTY-ACID--COA LIGASE"/>
    <property type="match status" value="1"/>
</dbReference>
<dbReference type="Pfam" id="PF00501">
    <property type="entry name" value="AMP-binding"/>
    <property type="match status" value="1"/>
</dbReference>
<dbReference type="SUPFAM" id="SSF56801">
    <property type="entry name" value="Acetyl-CoA synthetase-like"/>
    <property type="match status" value="1"/>
</dbReference>
<dbReference type="PROSITE" id="PS00455">
    <property type="entry name" value="AMP_BINDING"/>
    <property type="match status" value="1"/>
</dbReference>
<organism>
    <name type="scientific">Saccharomyces cerevisiae (strain ATCC 204508 / S288c)</name>
    <name type="common">Baker's yeast</name>
    <dbReference type="NCBI Taxonomy" id="559292"/>
    <lineage>
        <taxon>Eukaryota</taxon>
        <taxon>Fungi</taxon>
        <taxon>Dikarya</taxon>
        <taxon>Ascomycota</taxon>
        <taxon>Saccharomycotina</taxon>
        <taxon>Saccharomycetes</taxon>
        <taxon>Saccharomycetales</taxon>
        <taxon>Saccharomycetaceae</taxon>
        <taxon>Saccharomyces</taxon>
    </lineage>
</organism>
<reference key="1">
    <citation type="journal article" date="1994" name="J. Biol. Chem.">
        <title>Genetic analysis of the role of Saccharomyces cerevisiae acyl-CoA synthetase genes in regulating protein N-myristoylation.</title>
        <authorList>
            <person name="Johnson D.R."/>
            <person name="Knoll L.J."/>
            <person name="Rowley N."/>
            <person name="Gordon J.I."/>
        </authorList>
    </citation>
    <scope>NUCLEOTIDE SEQUENCE [GENOMIC DNA]</scope>
    <source>
        <strain>ATCC 204511 / S288c / AB972</strain>
    </source>
</reference>
<reference key="2">
    <citation type="journal article" date="1997" name="Nature">
        <title>The nucleotide sequence of Saccharomyces cerevisiae chromosome IX.</title>
        <authorList>
            <person name="Churcher C.M."/>
            <person name="Bowman S."/>
            <person name="Badcock K."/>
            <person name="Bankier A.T."/>
            <person name="Brown D."/>
            <person name="Chillingworth T."/>
            <person name="Connor R."/>
            <person name="Devlin K."/>
            <person name="Gentles S."/>
            <person name="Hamlin N."/>
            <person name="Harris D.E."/>
            <person name="Horsnell T."/>
            <person name="Hunt S."/>
            <person name="Jagels K."/>
            <person name="Jones M."/>
            <person name="Lye G."/>
            <person name="Moule S."/>
            <person name="Odell C."/>
            <person name="Pearson D."/>
            <person name="Rajandream M.A."/>
            <person name="Rice P."/>
            <person name="Rowley N."/>
            <person name="Skelton J."/>
            <person name="Smith V."/>
            <person name="Walsh S.V."/>
            <person name="Whitehead S."/>
            <person name="Barrell B.G."/>
        </authorList>
    </citation>
    <scope>NUCLEOTIDE SEQUENCE [LARGE SCALE GENOMIC DNA]</scope>
    <source>
        <strain>ATCC 204508 / S288c</strain>
    </source>
</reference>
<reference key="3">
    <citation type="journal article" date="2014" name="G3 (Bethesda)">
        <title>The reference genome sequence of Saccharomyces cerevisiae: Then and now.</title>
        <authorList>
            <person name="Engel S.R."/>
            <person name="Dietrich F.S."/>
            <person name="Fisk D.G."/>
            <person name="Binkley G."/>
            <person name="Balakrishnan R."/>
            <person name="Costanzo M.C."/>
            <person name="Dwight S.S."/>
            <person name="Hitz B.C."/>
            <person name="Karra K."/>
            <person name="Nash R.S."/>
            <person name="Weng S."/>
            <person name="Wong E.D."/>
            <person name="Lloyd P."/>
            <person name="Skrzypek M.S."/>
            <person name="Miyasato S.R."/>
            <person name="Simison M."/>
            <person name="Cherry J.M."/>
        </authorList>
    </citation>
    <scope>GENOME REANNOTATION</scope>
    <source>
        <strain>ATCC 204508 / S288c</strain>
    </source>
</reference>
<reference key="4">
    <citation type="journal article" date="2007" name="Genome Res.">
        <title>Approaching a complete repository of sequence-verified protein-encoding clones for Saccharomyces cerevisiae.</title>
        <authorList>
            <person name="Hu Y."/>
            <person name="Rolfs A."/>
            <person name="Bhullar B."/>
            <person name="Murthy T.V.S."/>
            <person name="Zhu C."/>
            <person name="Berger M.F."/>
            <person name="Camargo A.A."/>
            <person name="Kelley F."/>
            <person name="McCarron S."/>
            <person name="Jepson D."/>
            <person name="Richardson A."/>
            <person name="Raphael J."/>
            <person name="Moreira D."/>
            <person name="Taycher E."/>
            <person name="Zuo D."/>
            <person name="Mohr S."/>
            <person name="Kane M.F."/>
            <person name="Williamson J."/>
            <person name="Simpson A.J.G."/>
            <person name="Bulyk M.L."/>
            <person name="Harlow E."/>
            <person name="Marsischky G."/>
            <person name="Kolodner R.D."/>
            <person name="LaBaer J."/>
        </authorList>
    </citation>
    <scope>NUCLEOTIDE SEQUENCE [GENOMIC DNA]</scope>
    <source>
        <strain>ATCC 204508 / S288c</strain>
    </source>
</reference>
<reference key="5">
    <citation type="journal article" date="1994" name="J. Biol. Chem.">
        <title>Biochemical studies of three Saccharomyces cerevisiae acyl-CoA synthetases, Faa1p, Faa2p, and Faa3p.</title>
        <authorList>
            <person name="Knoll L.J."/>
            <person name="Johnson D.R."/>
            <person name="Gordon J.I."/>
        </authorList>
    </citation>
    <scope>FUNCTION</scope>
    <scope>CATALYTIC ACTIVITY</scope>
    <scope>BIOPHYSICOCHEMICAL PROPERTIES</scope>
</reference>
<reference key="6">
    <citation type="journal article" date="2003" name="Nature">
        <title>Global analysis of protein localization in budding yeast.</title>
        <authorList>
            <person name="Huh W.-K."/>
            <person name="Falvo J.V."/>
            <person name="Gerke L.C."/>
            <person name="Carroll A.S."/>
            <person name="Howson R.W."/>
            <person name="Weissman J.S."/>
            <person name="O'Shea E.K."/>
        </authorList>
    </citation>
    <scope>SUBCELLULAR LOCATION [LARGE SCALE ANALYSIS]</scope>
</reference>
<reference key="7">
    <citation type="journal article" date="2003" name="Nature">
        <title>Global analysis of protein expression in yeast.</title>
        <authorList>
            <person name="Ghaemmaghami S."/>
            <person name="Huh W.-K."/>
            <person name="Bower K."/>
            <person name="Howson R.W."/>
            <person name="Belle A."/>
            <person name="Dephoure N."/>
            <person name="O'Shea E.K."/>
            <person name="Weissman J.S."/>
        </authorList>
    </citation>
    <scope>LEVEL OF PROTEIN EXPRESSION [LARGE SCALE ANALYSIS]</scope>
</reference>
<reference key="8">
    <citation type="journal article" date="2010" name="Science">
        <title>A global protein kinase and phosphatase interaction network in yeast.</title>
        <authorList>
            <person name="Breitkreutz A."/>
            <person name="Choi H."/>
            <person name="Sharom J.R."/>
            <person name="Boucher L."/>
            <person name="Neduva V."/>
            <person name="Larsen B."/>
            <person name="Lin Z.Y."/>
            <person name="Breitkreutz B.J."/>
            <person name="Stark C."/>
            <person name="Liu G."/>
            <person name="Ahn J."/>
            <person name="Dewar-Darch D."/>
            <person name="Reguly T."/>
            <person name="Tang X."/>
            <person name="Almeida R."/>
            <person name="Qin Z.S."/>
            <person name="Pawson T."/>
            <person name="Gingras A.C."/>
            <person name="Nesvizhskii A.I."/>
            <person name="Tyers M."/>
        </authorList>
    </citation>
    <scope>IDENTIFICATION BY MASS SPECTROMETRY</scope>
    <scope>INTERACTION WITH FRK1</scope>
</reference>
<reference key="9">
    <citation type="journal article" date="2012" name="Proc. Natl. Acad. Sci. U.S.A.">
        <title>N-terminal acetylome analyses and functional insights of the N-terminal acetyltransferase NatB.</title>
        <authorList>
            <person name="Van Damme P."/>
            <person name="Lasa M."/>
            <person name="Polevoda B."/>
            <person name="Gazquez C."/>
            <person name="Elosegui-Artola A."/>
            <person name="Kim D.S."/>
            <person name="De Juan-Pardo E."/>
            <person name="Demeyer K."/>
            <person name="Hole K."/>
            <person name="Larrea E."/>
            <person name="Timmerman E."/>
            <person name="Prieto J."/>
            <person name="Arnesen T."/>
            <person name="Sherman F."/>
            <person name="Gevaert K."/>
            <person name="Aldabe R."/>
        </authorList>
    </citation>
    <scope>ACETYLATION [LARGE SCALE ANALYSIS] AT SER-2</scope>
    <scope>CLEAVAGE OF INITIATOR METHIONINE [LARGE SCALE ANALYSIS]</scope>
    <scope>IDENTIFICATION BY MASS SPECTROMETRY [LARGE SCALE ANALYSIS]</scope>
</reference>
<keyword id="KW-0007">Acetylation</keyword>
<keyword id="KW-0067">ATP-binding</keyword>
<keyword id="KW-1003">Cell membrane</keyword>
<keyword id="KW-0276">Fatty acid metabolism</keyword>
<keyword id="KW-0436">Ligase</keyword>
<keyword id="KW-0443">Lipid metabolism</keyword>
<keyword id="KW-0460">Magnesium</keyword>
<keyword id="KW-0472">Membrane</keyword>
<keyword id="KW-0547">Nucleotide-binding</keyword>
<keyword id="KW-1185">Reference proteome</keyword>